<organism>
    <name type="scientific">Mus musculus</name>
    <name type="common">Mouse</name>
    <dbReference type="NCBI Taxonomy" id="10090"/>
    <lineage>
        <taxon>Eukaryota</taxon>
        <taxon>Metazoa</taxon>
        <taxon>Chordata</taxon>
        <taxon>Craniata</taxon>
        <taxon>Vertebrata</taxon>
        <taxon>Euteleostomi</taxon>
        <taxon>Mammalia</taxon>
        <taxon>Eutheria</taxon>
        <taxon>Euarchontoglires</taxon>
        <taxon>Glires</taxon>
        <taxon>Rodentia</taxon>
        <taxon>Myomorpha</taxon>
        <taxon>Muroidea</taxon>
        <taxon>Muridae</taxon>
        <taxon>Murinae</taxon>
        <taxon>Mus</taxon>
        <taxon>Mus</taxon>
    </lineage>
</organism>
<protein>
    <recommendedName>
        <fullName>Dapper homolog 1</fullName>
    </recommendedName>
    <alternativeName>
        <fullName>Dapper antagonist of catenin 1</fullName>
    </alternativeName>
    <alternativeName>
        <fullName>Frodo homolog</fullName>
    </alternativeName>
    <alternativeName>
        <fullName>MDpr1</fullName>
    </alternativeName>
    <alternativeName>
        <fullName>Thymus-expressed novel gene 3 protein</fullName>
    </alternativeName>
</protein>
<keyword id="KW-0175">Coiled coil</keyword>
<keyword id="KW-0963">Cytoplasm</keyword>
<keyword id="KW-0217">Developmental protein</keyword>
<keyword id="KW-0524">Neurogenesis</keyword>
<keyword id="KW-0539">Nucleus</keyword>
<keyword id="KW-0597">Phosphoprotein</keyword>
<keyword id="KW-1185">Reference proteome</keyword>
<keyword id="KW-0770">Synapse</keyword>
<keyword id="KW-0879">Wnt signaling pathway</keyword>
<accession>Q8R4A3</accession>
<accession>Q80VG9</accession>
<accession>Q8BP49</accession>
<accession>Q9JK89</accession>
<name>DACT1_MOUSE</name>
<reference key="1">
    <citation type="journal article" date="2002" name="Dev. Cell">
        <title>Dapper, a Dishevelled-associated antagonist of beta-catenin and JNK signaling, is required for notochord formation.</title>
        <authorList>
            <person name="Cheyette B.N.R."/>
            <person name="Waxman J.S."/>
            <person name="Miller J.R."/>
            <person name="Takemaru K."/>
            <person name="Sheldahl L.C."/>
            <person name="Khlebtsova N."/>
            <person name="Fox E.P."/>
            <person name="Earnest T.N."/>
            <person name="Moon R.T."/>
        </authorList>
    </citation>
    <scope>NUCLEOTIDE SEQUENCE [MRNA]</scope>
    <scope>TISSUE SPECIFICITY</scope>
    <source>
        <tissue>Cerebellum</tissue>
    </source>
</reference>
<reference key="2">
    <citation type="journal article" date="2006" name="Dev. Dyn.">
        <title>Vertebrate homologues of Frodo are dynamically expressed during embryonic development in tissues undergoing extensive morphogenetic movements.</title>
        <authorList>
            <person name="Hunter N.L."/>
            <person name="Hikasa H."/>
            <person name="Dymecki S.M."/>
            <person name="Sokol S.Y."/>
        </authorList>
    </citation>
    <scope>NUCLEOTIDE SEQUENCE [MRNA] OF 17-511</scope>
    <scope>DEVELOPMENTAL STAGE</scope>
    <source>
        <strain>FVB/N</strain>
    </source>
</reference>
<reference key="3">
    <citation type="journal article" date="2005" name="Science">
        <title>The transcriptional landscape of the mammalian genome.</title>
        <authorList>
            <person name="Carninci P."/>
            <person name="Kasukawa T."/>
            <person name="Katayama S."/>
            <person name="Gough J."/>
            <person name="Frith M.C."/>
            <person name="Maeda N."/>
            <person name="Oyama R."/>
            <person name="Ravasi T."/>
            <person name="Lenhard B."/>
            <person name="Wells C."/>
            <person name="Kodzius R."/>
            <person name="Shimokawa K."/>
            <person name="Bajic V.B."/>
            <person name="Brenner S.E."/>
            <person name="Batalov S."/>
            <person name="Forrest A.R."/>
            <person name="Zavolan M."/>
            <person name="Davis M.J."/>
            <person name="Wilming L.G."/>
            <person name="Aidinis V."/>
            <person name="Allen J.E."/>
            <person name="Ambesi-Impiombato A."/>
            <person name="Apweiler R."/>
            <person name="Aturaliya R.N."/>
            <person name="Bailey T.L."/>
            <person name="Bansal M."/>
            <person name="Baxter L."/>
            <person name="Beisel K.W."/>
            <person name="Bersano T."/>
            <person name="Bono H."/>
            <person name="Chalk A.M."/>
            <person name="Chiu K.P."/>
            <person name="Choudhary V."/>
            <person name="Christoffels A."/>
            <person name="Clutterbuck D.R."/>
            <person name="Crowe M.L."/>
            <person name="Dalla E."/>
            <person name="Dalrymple B.P."/>
            <person name="de Bono B."/>
            <person name="Della Gatta G."/>
            <person name="di Bernardo D."/>
            <person name="Down T."/>
            <person name="Engstrom P."/>
            <person name="Fagiolini M."/>
            <person name="Faulkner G."/>
            <person name="Fletcher C.F."/>
            <person name="Fukushima T."/>
            <person name="Furuno M."/>
            <person name="Futaki S."/>
            <person name="Gariboldi M."/>
            <person name="Georgii-Hemming P."/>
            <person name="Gingeras T.R."/>
            <person name="Gojobori T."/>
            <person name="Green R.E."/>
            <person name="Gustincich S."/>
            <person name="Harbers M."/>
            <person name="Hayashi Y."/>
            <person name="Hensch T.K."/>
            <person name="Hirokawa N."/>
            <person name="Hill D."/>
            <person name="Huminiecki L."/>
            <person name="Iacono M."/>
            <person name="Ikeo K."/>
            <person name="Iwama A."/>
            <person name="Ishikawa T."/>
            <person name="Jakt M."/>
            <person name="Kanapin A."/>
            <person name="Katoh M."/>
            <person name="Kawasawa Y."/>
            <person name="Kelso J."/>
            <person name="Kitamura H."/>
            <person name="Kitano H."/>
            <person name="Kollias G."/>
            <person name="Krishnan S.P."/>
            <person name="Kruger A."/>
            <person name="Kummerfeld S.K."/>
            <person name="Kurochkin I.V."/>
            <person name="Lareau L.F."/>
            <person name="Lazarevic D."/>
            <person name="Lipovich L."/>
            <person name="Liu J."/>
            <person name="Liuni S."/>
            <person name="McWilliam S."/>
            <person name="Madan Babu M."/>
            <person name="Madera M."/>
            <person name="Marchionni L."/>
            <person name="Matsuda H."/>
            <person name="Matsuzawa S."/>
            <person name="Miki H."/>
            <person name="Mignone F."/>
            <person name="Miyake S."/>
            <person name="Morris K."/>
            <person name="Mottagui-Tabar S."/>
            <person name="Mulder N."/>
            <person name="Nakano N."/>
            <person name="Nakauchi H."/>
            <person name="Ng P."/>
            <person name="Nilsson R."/>
            <person name="Nishiguchi S."/>
            <person name="Nishikawa S."/>
            <person name="Nori F."/>
            <person name="Ohara O."/>
            <person name="Okazaki Y."/>
            <person name="Orlando V."/>
            <person name="Pang K.C."/>
            <person name="Pavan W.J."/>
            <person name="Pavesi G."/>
            <person name="Pesole G."/>
            <person name="Petrovsky N."/>
            <person name="Piazza S."/>
            <person name="Reed J."/>
            <person name="Reid J.F."/>
            <person name="Ring B.Z."/>
            <person name="Ringwald M."/>
            <person name="Rost B."/>
            <person name="Ruan Y."/>
            <person name="Salzberg S.L."/>
            <person name="Sandelin A."/>
            <person name="Schneider C."/>
            <person name="Schoenbach C."/>
            <person name="Sekiguchi K."/>
            <person name="Semple C.A."/>
            <person name="Seno S."/>
            <person name="Sessa L."/>
            <person name="Sheng Y."/>
            <person name="Shibata Y."/>
            <person name="Shimada H."/>
            <person name="Shimada K."/>
            <person name="Silva D."/>
            <person name="Sinclair B."/>
            <person name="Sperling S."/>
            <person name="Stupka E."/>
            <person name="Sugiura K."/>
            <person name="Sultana R."/>
            <person name="Takenaka Y."/>
            <person name="Taki K."/>
            <person name="Tammoja K."/>
            <person name="Tan S.L."/>
            <person name="Tang S."/>
            <person name="Taylor M.S."/>
            <person name="Tegner J."/>
            <person name="Teichmann S.A."/>
            <person name="Ueda H.R."/>
            <person name="van Nimwegen E."/>
            <person name="Verardo R."/>
            <person name="Wei C.L."/>
            <person name="Yagi K."/>
            <person name="Yamanishi H."/>
            <person name="Zabarovsky E."/>
            <person name="Zhu S."/>
            <person name="Zimmer A."/>
            <person name="Hide W."/>
            <person name="Bult C."/>
            <person name="Grimmond S.M."/>
            <person name="Teasdale R.D."/>
            <person name="Liu E.T."/>
            <person name="Brusic V."/>
            <person name="Quackenbush J."/>
            <person name="Wahlestedt C."/>
            <person name="Mattick J.S."/>
            <person name="Hume D.A."/>
            <person name="Kai C."/>
            <person name="Sasaki D."/>
            <person name="Tomaru Y."/>
            <person name="Fukuda S."/>
            <person name="Kanamori-Katayama M."/>
            <person name="Suzuki M."/>
            <person name="Aoki J."/>
            <person name="Arakawa T."/>
            <person name="Iida J."/>
            <person name="Imamura K."/>
            <person name="Itoh M."/>
            <person name="Kato T."/>
            <person name="Kawaji H."/>
            <person name="Kawagashira N."/>
            <person name="Kawashima T."/>
            <person name="Kojima M."/>
            <person name="Kondo S."/>
            <person name="Konno H."/>
            <person name="Nakano K."/>
            <person name="Ninomiya N."/>
            <person name="Nishio T."/>
            <person name="Okada M."/>
            <person name="Plessy C."/>
            <person name="Shibata K."/>
            <person name="Shiraki T."/>
            <person name="Suzuki S."/>
            <person name="Tagami M."/>
            <person name="Waki K."/>
            <person name="Watahiki A."/>
            <person name="Okamura-Oho Y."/>
            <person name="Suzuki H."/>
            <person name="Kawai J."/>
            <person name="Hayashizaki Y."/>
        </authorList>
    </citation>
    <scope>NUCLEOTIDE SEQUENCE [LARGE SCALE MRNA] OF 96-778</scope>
    <source>
        <strain>C57BL/6J</strain>
        <tissue>Embryo</tissue>
    </source>
</reference>
<reference key="4">
    <citation type="journal article" date="2001" name="Zhongguo Sheng Wu Hua Xue Yu Fen Zi Sheng Wu Xue Bao">
        <title>Cloning of a murine cDNA and its human homolog encoding transcription factor-like proteins.</title>
        <authorList>
            <person name="Gong S."/>
            <person name="Qian X."/>
            <person name="Fu W."/>
            <person name="Chen W."/>
        </authorList>
    </citation>
    <scope>NUCLEOTIDE SEQUENCE [MRNA] OF 189-778</scope>
</reference>
<reference key="5">
    <citation type="journal article" date="2003" name="Mol. Cell">
        <title>Direct binding of the PDZ domain of Dishevelled to a conserved internal sequence in the C-terminal region of Frizzled.</title>
        <authorList>
            <person name="Wong H.C."/>
            <person name="Bourdelas A."/>
            <person name="Krauss A."/>
            <person name="Lee H.J."/>
            <person name="Shao Y."/>
            <person name="Wu D."/>
            <person name="Mlodzik M."/>
            <person name="Shi D.L."/>
            <person name="Zheng J."/>
        </authorList>
    </citation>
    <scope>INTERACTION WITH DVL1</scope>
    <scope>DOMAIN</scope>
</reference>
<reference key="6">
    <citation type="journal article" date="2006" name="Dev. Dyn.">
        <title>Three Dact gene family members are expressed during embryonic development and in the adult brains of mice.</title>
        <authorList>
            <person name="Fisher D.A."/>
            <person name="Kivimaee S."/>
            <person name="Hoshino J."/>
            <person name="Suriben R."/>
            <person name="Martin P.-M."/>
            <person name="Baxter N."/>
            <person name="Cheyette B.N.R."/>
        </authorList>
    </citation>
    <scope>TISSUE SPECIFICITY</scope>
    <scope>DEVELOPMENTAL STAGE</scope>
</reference>
<reference key="7">
    <citation type="journal article" date="2007" name="FASEB J.">
        <title>The evolutionally conserved activity of Dapper2 in antagonizing TGF-beta signaling.</title>
        <authorList>
            <person name="Su Y."/>
            <person name="Zhang L."/>
            <person name="Gao X."/>
            <person name="Meng F."/>
            <person name="Wen J."/>
            <person name="Zhou H."/>
            <person name="Meng A."/>
            <person name="Chen Y.-G."/>
        </authorList>
    </citation>
    <scope>FUNCTION</scope>
</reference>
<reference key="8">
    <citation type="journal article" date="2009" name="Diabetes">
        <title>Dact1, a nutritionally regulated preadipocyte gene, controls adipogenesis by coordinating the Wnt/beta-catenin signaling network.</title>
        <authorList>
            <person name="Lagathu C."/>
            <person name="Christodoulides C."/>
            <person name="Virtue S."/>
            <person name="Cawthorn W.P."/>
            <person name="Franzin C."/>
            <person name="Kimber W.A."/>
            <person name="Nora E.D."/>
            <person name="Campbell M."/>
            <person name="Medina-Gomez G."/>
            <person name="Cheyette B.N."/>
            <person name="Vidal-Puig A.J."/>
            <person name="Sethi J.K."/>
        </authorList>
    </citation>
    <scope>FUNCTION</scope>
</reference>
<reference key="9">
    <citation type="journal article" date="2009" name="Nat. Genet.">
        <title>Posterior malformations in Dact1 mutant mice arise through misregulated Vangl2 at the primitive streak.</title>
        <authorList>
            <person name="Suriben R."/>
            <person name="Kivimae S."/>
            <person name="Fisher D.A."/>
            <person name="Moon R.T."/>
            <person name="Cheyette B.N."/>
        </authorList>
    </citation>
    <scope>FUNCTION</scope>
    <scope>DISRUPTION PHENOTYPE</scope>
</reference>
<reference key="10">
    <citation type="journal article" date="2010" name="J. Biol. Chem.">
        <title>Loss of Dact1 disrupts planar cell polarity signaling by altering dishevelled activity and leads to posterior malformation in mice.</title>
        <authorList>
            <person name="Wen J."/>
            <person name="Chiang Y.J."/>
            <person name="Gao C."/>
            <person name="Xue H."/>
            <person name="Xu J."/>
            <person name="Ning Y."/>
            <person name="Hodes R.J."/>
            <person name="Gao X."/>
            <person name="Chen Y.G."/>
        </authorList>
    </citation>
    <scope>FUNCTION</scope>
    <scope>INTERACTION WITH DVL2 AND VANGL2</scope>
    <scope>DISRUPTION PHENOTYPE</scope>
</reference>
<reference key="11">
    <citation type="journal article" date="2011" name="BMC Biochem.">
        <title>All Dact (Dapper/Frodo) scaffold proteins dimerize and exhibit conserved interactions with Vangl, Dvl, and serine/threonine kinases.</title>
        <authorList>
            <person name="Kivimae S."/>
            <person name="Yang X.Y."/>
            <person name="Cheyette B.N."/>
        </authorList>
    </citation>
    <scope>PHOSPHORYLATION</scope>
    <scope>SELF-ASSOCIATION</scope>
    <scope>INTERACTION WITH DACT2; DACT3; CSNK1D; CSNK2A1; PKA; PKC; CSNK2B; GSK3B; DVL1; DLV2; DVL3; VANGL1; VANGL2; CTNND1 AND HDAC1</scope>
</reference>
<reference key="12">
    <citation type="journal article" date="2010" name="J. Neurosci.">
        <title>Dact1 is a postsynaptic protein required for dendrite, spine, and excitatory synapse development in the mouse forebrain.</title>
        <authorList>
            <person name="Okerlund N.D."/>
            <person name="Kivimae S."/>
            <person name="Tong C.K."/>
            <person name="Peng I.F."/>
            <person name="Ullian E.M."/>
            <person name="Cheyette B.N."/>
        </authorList>
    </citation>
    <scope>FUNCTION</scope>
    <scope>SUBCELLULAR LOCATION</scope>
</reference>
<proteinExistence type="evidence at protein level"/>
<sequence>MKPDAAREPEPLSPGRGAEAEGRWRERGEADTERQRTRERQEATLAGLAELGYLRQRQELLVRGALRCSGTVGTVAPRSGELRGDAAQRSRLEEKFLEENILLLRRQLNCLRRRDAGLLNQLQELDKQISDLRLDVEKTSEEHLETDSRPSSGFYELSDGASGSLSNSSNSVFSECLSSCHSSTCFCSPLEAALTISDGCPKSADVNPKYQCDLVSKNGNDVYRYPSPLHAVAVQSPMFLLCLTGNTLREEEGLGSHASDICIGSELNATKTDNSLPSPSSLWSASHPASSKKMDGYILSLVQKKTHPVRTNKPRTSVNADPTKGLLRNGSVCVRAPSGVPPGSSVNFKNTKQMCLPAGGITSLENGPFSPPKQRSKDSKTDQLESKRLALPESCSAGAAMEPQSKHVPKAAKAASQELTRCQAGLGESMKESNQASAVSPKTSPGRGPVAPAESKALQLPKKMSQKNSLQAVPALDRPALDFKSEGSSQSLEEGHLVKAQFIPGQQAAARPHRAHRNPGVARSATLKARGQAAMEHGLPTVREKPRAAGKKCRFPDDSDTNKKFRKTSAKGRRSGGLQDAGLPGRALGTGGHRAGSRAHAHGREPVVAKPKHKRTDYRRWKSSAEVSYEEALRRARRARREHGAAYRVAVALPYASPYAYVPSDSEYSAECESLFHSTVVDTSEDEQSNYTTNCFGDSESSVSEGDFVGESTTTSDSEESGGLIWSQFVQTLPIQTVTAPDLHTRPTKTFVKIKASHNLKKKILRFRSGSLKLMTTV</sequence>
<gene>
    <name type="primary">Dact1</name>
    <name type="synonym">Thyex3</name>
</gene>
<dbReference type="EMBL" id="AF488775">
    <property type="protein sequence ID" value="AAM12547.1"/>
    <property type="molecule type" value="mRNA"/>
</dbReference>
<dbReference type="EMBL" id="AY208970">
    <property type="protein sequence ID" value="AAO49712.1"/>
    <property type="molecule type" value="mRNA"/>
</dbReference>
<dbReference type="EMBL" id="AK077691">
    <property type="protein sequence ID" value="BAC36958.1"/>
    <property type="status" value="ALT_SEQ"/>
    <property type="molecule type" value="mRNA"/>
</dbReference>
<dbReference type="EMBL" id="AF251078">
    <property type="protein sequence ID" value="AAF65568.1"/>
    <property type="status" value="ALT_INIT"/>
    <property type="molecule type" value="mRNA"/>
</dbReference>
<dbReference type="CCDS" id="CCDS25963.1"/>
<dbReference type="RefSeq" id="NP_067507.2">
    <property type="nucleotide sequence ID" value="NM_021532.4"/>
</dbReference>
<dbReference type="SMR" id="Q8R4A3"/>
<dbReference type="BioGRID" id="208502">
    <property type="interactions" value="11"/>
</dbReference>
<dbReference type="FunCoup" id="Q8R4A3">
    <property type="interactions" value="338"/>
</dbReference>
<dbReference type="IntAct" id="Q8R4A3">
    <property type="interactions" value="20"/>
</dbReference>
<dbReference type="STRING" id="10090.ENSMUSP00000117169"/>
<dbReference type="iPTMnet" id="Q8R4A3"/>
<dbReference type="PhosphoSitePlus" id="Q8R4A3"/>
<dbReference type="PaxDb" id="10090-ENSMUSP00000117169"/>
<dbReference type="ProteomicsDB" id="279153"/>
<dbReference type="Antibodypedia" id="66">
    <property type="antibodies" value="150 antibodies from 24 providers"/>
</dbReference>
<dbReference type="DNASU" id="59036"/>
<dbReference type="Ensembl" id="ENSMUST00000061273.12">
    <property type="protein sequence ID" value="ENSMUSP00000058943.6"/>
    <property type="gene ID" value="ENSMUSG00000044548.12"/>
</dbReference>
<dbReference type="GeneID" id="59036"/>
<dbReference type="KEGG" id="mmu:59036"/>
<dbReference type="UCSC" id="uc007nup.2">
    <property type="organism name" value="mouse"/>
</dbReference>
<dbReference type="AGR" id="MGI:1891740"/>
<dbReference type="CTD" id="51339"/>
<dbReference type="MGI" id="MGI:1891740">
    <property type="gene designation" value="Dact1"/>
</dbReference>
<dbReference type="VEuPathDB" id="HostDB:ENSMUSG00000044548"/>
<dbReference type="eggNOG" id="ENOG502QVXB">
    <property type="taxonomic scope" value="Eukaryota"/>
</dbReference>
<dbReference type="GeneTree" id="ENSGT00950000183181"/>
<dbReference type="HOGENOM" id="CLU_021211_1_0_1"/>
<dbReference type="InParanoid" id="Q8R4A3"/>
<dbReference type="OrthoDB" id="9448112at2759"/>
<dbReference type="PhylomeDB" id="Q8R4A3"/>
<dbReference type="Reactome" id="R-MMU-4641258">
    <property type="pathway name" value="Degradation of DVL"/>
</dbReference>
<dbReference type="BioGRID-ORCS" id="59036">
    <property type="hits" value="4 hits in 75 CRISPR screens"/>
</dbReference>
<dbReference type="PRO" id="PR:Q8R4A3"/>
<dbReference type="Proteomes" id="UP000000589">
    <property type="component" value="Chromosome 12"/>
</dbReference>
<dbReference type="RNAct" id="Q8R4A3">
    <property type="molecule type" value="protein"/>
</dbReference>
<dbReference type="Bgee" id="ENSMUSG00000044548">
    <property type="expression patterns" value="Expressed in presomitic mesoderm and 261 other cell types or tissues"/>
</dbReference>
<dbReference type="ExpressionAtlas" id="Q8R4A3">
    <property type="expression patterns" value="baseline and differential"/>
</dbReference>
<dbReference type="GO" id="GO:0005737">
    <property type="term" value="C:cytoplasm"/>
    <property type="evidence" value="ECO:0000250"/>
    <property type="project" value="UniProtKB"/>
</dbReference>
<dbReference type="GO" id="GO:0098978">
    <property type="term" value="C:glutamatergic synapse"/>
    <property type="evidence" value="ECO:0000314"/>
    <property type="project" value="SynGO"/>
</dbReference>
<dbReference type="GO" id="GO:0005634">
    <property type="term" value="C:nucleus"/>
    <property type="evidence" value="ECO:0007669"/>
    <property type="project" value="UniProtKB-SubCell"/>
</dbReference>
<dbReference type="GO" id="GO:0098794">
    <property type="term" value="C:postsynapse"/>
    <property type="evidence" value="ECO:0000314"/>
    <property type="project" value="SynGO"/>
</dbReference>
<dbReference type="GO" id="GO:0008013">
    <property type="term" value="F:beta-catenin binding"/>
    <property type="evidence" value="ECO:0000250"/>
    <property type="project" value="UniProtKB"/>
</dbReference>
<dbReference type="GO" id="GO:0070097">
    <property type="term" value="F:delta-catenin binding"/>
    <property type="evidence" value="ECO:0000314"/>
    <property type="project" value="UniProtKB"/>
</dbReference>
<dbReference type="GO" id="GO:0051018">
    <property type="term" value="F:protein kinase A binding"/>
    <property type="evidence" value="ECO:0000314"/>
    <property type="project" value="UniProtKB"/>
</dbReference>
<dbReference type="GO" id="GO:0005080">
    <property type="term" value="F:protein kinase C binding"/>
    <property type="evidence" value="ECO:0000314"/>
    <property type="project" value="UniProtKB"/>
</dbReference>
<dbReference type="GO" id="GO:0048813">
    <property type="term" value="P:dendrite morphogenesis"/>
    <property type="evidence" value="ECO:0000315"/>
    <property type="project" value="MGI"/>
</dbReference>
<dbReference type="GO" id="GO:0048619">
    <property type="term" value="P:embryonic hindgut morphogenesis"/>
    <property type="evidence" value="ECO:0000315"/>
    <property type="project" value="UniProtKB"/>
</dbReference>
<dbReference type="GO" id="GO:0048598">
    <property type="term" value="P:embryonic morphogenesis"/>
    <property type="evidence" value="ECO:0000315"/>
    <property type="project" value="MGI"/>
</dbReference>
<dbReference type="GO" id="GO:0001702">
    <property type="term" value="P:gastrulation with mouth forming second"/>
    <property type="evidence" value="ECO:0000315"/>
    <property type="project" value="MGI"/>
</dbReference>
<dbReference type="GO" id="GO:0090090">
    <property type="term" value="P:negative regulation of canonical Wnt signaling pathway"/>
    <property type="evidence" value="ECO:0000315"/>
    <property type="project" value="MGI"/>
</dbReference>
<dbReference type="GO" id="GO:2000134">
    <property type="term" value="P:negative regulation of G1/S transition of mitotic cell cycle"/>
    <property type="evidence" value="ECO:0000250"/>
    <property type="project" value="UniProtKB"/>
</dbReference>
<dbReference type="GO" id="GO:0046329">
    <property type="term" value="P:negative regulation of JNK cascade"/>
    <property type="evidence" value="ECO:0000314"/>
    <property type="project" value="UniProtKB"/>
</dbReference>
<dbReference type="GO" id="GO:0000122">
    <property type="term" value="P:negative regulation of transcription by RNA polymerase II"/>
    <property type="evidence" value="ECO:0000250"/>
    <property type="project" value="UniProtKB"/>
</dbReference>
<dbReference type="GO" id="GO:0030178">
    <property type="term" value="P:negative regulation of Wnt signaling pathway"/>
    <property type="evidence" value="ECO:0000314"/>
    <property type="project" value="UniProtKB"/>
</dbReference>
<dbReference type="GO" id="GO:0090263">
    <property type="term" value="P:positive regulation of canonical Wnt signaling pathway"/>
    <property type="evidence" value="ECO:0000250"/>
    <property type="project" value="UniProtKB"/>
</dbReference>
<dbReference type="GO" id="GO:0045600">
    <property type="term" value="P:positive regulation of fat cell differentiation"/>
    <property type="evidence" value="ECO:0000315"/>
    <property type="project" value="MGI"/>
</dbReference>
<dbReference type="GO" id="GO:0045732">
    <property type="term" value="P:positive regulation of protein catabolic process"/>
    <property type="evidence" value="ECO:0000266"/>
    <property type="project" value="MGI"/>
</dbReference>
<dbReference type="GO" id="GO:0030177">
    <property type="term" value="P:positive regulation of Wnt signaling pathway"/>
    <property type="evidence" value="ECO:0000250"/>
    <property type="project" value="UniProtKB"/>
</dbReference>
<dbReference type="GO" id="GO:0060828">
    <property type="term" value="P:regulation of canonical Wnt signaling pathway"/>
    <property type="evidence" value="ECO:0000250"/>
    <property type="project" value="UniProtKB"/>
</dbReference>
<dbReference type="GO" id="GO:0099175">
    <property type="term" value="P:regulation of postsynapse organization"/>
    <property type="evidence" value="ECO:0000314"/>
    <property type="project" value="SynGO"/>
</dbReference>
<dbReference type="GO" id="GO:0031647">
    <property type="term" value="P:regulation of protein stability"/>
    <property type="evidence" value="ECO:0000250"/>
    <property type="project" value="UniProtKB"/>
</dbReference>
<dbReference type="GO" id="GO:2000095">
    <property type="term" value="P:regulation of Wnt signaling pathway, planar cell polarity pathway"/>
    <property type="evidence" value="ECO:0000315"/>
    <property type="project" value="UniProtKB"/>
</dbReference>
<dbReference type="GO" id="GO:0050808">
    <property type="term" value="P:synapse organization"/>
    <property type="evidence" value="ECO:0000315"/>
    <property type="project" value="MGI"/>
</dbReference>
<dbReference type="GO" id="GO:0016055">
    <property type="term" value="P:Wnt signaling pathway"/>
    <property type="evidence" value="ECO:0007669"/>
    <property type="project" value="UniProtKB-KW"/>
</dbReference>
<dbReference type="InterPro" id="IPR024843">
    <property type="entry name" value="Dapper"/>
</dbReference>
<dbReference type="PANTHER" id="PTHR15919:SF12">
    <property type="entry name" value="DAPPER HOMOLOG 1"/>
    <property type="match status" value="1"/>
</dbReference>
<dbReference type="PANTHER" id="PTHR15919">
    <property type="entry name" value="DAPPER-RELATED"/>
    <property type="match status" value="1"/>
</dbReference>
<dbReference type="Pfam" id="PF15268">
    <property type="entry name" value="Dapper"/>
    <property type="match status" value="2"/>
</dbReference>
<comment type="function">
    <text evidence="1 9 10 11 12 13">Involved in regulation of intracellular signaling pathways during development. Specifically thought to play a role in canonical and/or non-canonical Wnt signaling pathways through interaction with DSH (Dishevelled) family proteins. The activation/inhibition of Wnt signaling may depend on the phosphorylation status. Proposed to regulate the degradation of CTNNB1/beta-catenin, thereby modulating the transcriptional activation of target genes of the Wnt signaling pathway. Its function in stabilizing CTNNB1 may involve inhibition of GSK3B activity. Promotes the membrane localization of CTNNB1. The cytoplasmic form can induce DVL2 degradation via a lysosome-dependent mechanism; the function is inhibited by PKA-induced binding to 14-3-3 proteins, such as YWHAB (By similarity). Seems to be involved in morphogenesis at the primitive streak by regulating VANGL2 and DVL2; the function seems to be independent of canonical Wnt signaling and rather involves the non-canonical Wnt/planar cell polarity (PCP) pathway. The nuclear form may prevent the formation of LEF1:CTNNB1 complex and recruit HDAC1 to LEF1 at target gene promoters to repress transcription thus antagonizing Wnt signaling (By similarity). May be involved in positive regulation of fat cell differentiation. During neuronal differentiation may be involved in excitatory synapse organization, and dendrite formation and establishment of spines.</text>
</comment>
<comment type="subunit">
    <text evidence="1">Can form homodimers and heterodimers with DACT2 or DACT3. Interacts with CSNK1D, PKA catalytic subunit, PKC-type kinase, CSNK2A1, CSNK2B, DVL1, DLV2, DVAL3, VANGL1, VANGL2, CTNND1 and HDAC1. Interacts with GSK3B; the interaction is indicative for an association of DACT1 with the beta-catenin destruction complex. Interacts with GSK3A. Interacts with YWHAB; the interaction is enhanced by PKA phosphorylating DACT1 at Ser-769. Interacts with CTNNB1 (By similarity).</text>
</comment>
<comment type="interaction">
    <interactant intactId="EBI-3870250">
        <id>Q8R4A3</id>
    </interactant>
    <interactant intactId="EBI-6392520">
        <id>Q0PHV7</id>
        <label>Dact3</label>
    </interactant>
    <organismsDiffer>false</organismsDiffer>
    <experiments>2</experiments>
</comment>
<comment type="interaction">
    <interactant intactId="EBI-3870250">
        <id>Q8R4A3</id>
    </interactant>
    <interactant intactId="EBI-1538407">
        <id>P51141</id>
        <label>Dvl1</label>
    </interactant>
    <organismsDiffer>false</organismsDiffer>
    <experiments>4</experiments>
</comment>
<comment type="interaction">
    <interactant intactId="EBI-3870250">
        <id>Q8R4A3</id>
    </interactant>
    <interactant intactId="EBI-641940">
        <id>Q60838</id>
        <label>Dvl2</label>
    </interactant>
    <organismsDiffer>false</organismsDiffer>
    <experiments>3</experiments>
</comment>
<comment type="interaction">
    <interactant intactId="EBI-3870250">
        <id>Q8R4A3</id>
    </interactant>
    <interactant intactId="EBI-1750744">
        <id>Q91ZD4</id>
        <label>Vangl2</label>
    </interactant>
    <organismsDiffer>false</organismsDiffer>
    <experiments>3</experiments>
</comment>
<comment type="subcellular location">
    <subcellularLocation>
        <location evidence="1">Cytoplasm</location>
    </subcellularLocation>
    <subcellularLocation>
        <location evidence="1">Nucleus</location>
    </subcellularLocation>
    <subcellularLocation>
        <location evidence="13">Synapse</location>
    </subcellularLocation>
    <text evidence="1">Shuttles between the nucleus and the cytoplasm. Seems to be nuclear in the absence of Wnt signaling and to translocate to the cytoplasm in its presence (By similarity).</text>
</comment>
<comment type="tissue specificity">
    <text evidence="5 8">Expressed in multiple tissues including brain, heart, kidney, liver and testis.</text>
</comment>
<comment type="developmental stage">
    <text evidence="7 8">Expression strongly increases from 9.5 dpc, peaks between 11.5 dpc and 13.5 dpc and diminishes slowly thereafter. Expressed in the somites during segmentation, limb bud mesenchyme, and developing central nervous system. Expressed in primitive streak mesoderm, neuroectoderm, neural crest, presomitic mesoderm and somites.</text>
</comment>
<comment type="domain">
    <text evidence="6">The C-terminal PDZ-binding motif mediates interaction with the PDZ domains of DSH (Dishevelled) family proteins.</text>
</comment>
<comment type="disruption phenotype">
    <text evidence="11 12">Mice die within a day of birth with malformations involving the spine, genitourinary system and distal digestive tract due to disrupted germ-layer morphogenesis at the primitive streak where cells undergo an epithelial-mesenchymal transition. Urogenital defects due to impaired hindgut formation start at embryonic day 8.25. Dvl2 and Vangl2 are found increased at the primitive streak, associated with abnormal distribution of E-cadherin.</text>
</comment>
<comment type="similarity">
    <text evidence="14">Belongs to the dapper family.</text>
</comment>
<comment type="sequence caution" evidence="14">
    <conflict type="erroneous initiation">
        <sequence resource="EMBL-CDS" id="AAF65568"/>
    </conflict>
    <text>Truncated N-terminus.</text>
</comment>
<comment type="sequence caution" evidence="14">
    <conflict type="frameshift">
        <sequence resource="EMBL-CDS" id="BAC36958"/>
    </conflict>
</comment>
<evidence type="ECO:0000250" key="1"/>
<evidence type="ECO:0000250" key="2">
    <source>
        <dbReference type="UniProtKB" id="Q9NYF0"/>
    </source>
</evidence>
<evidence type="ECO:0000255" key="3"/>
<evidence type="ECO:0000256" key="4">
    <source>
        <dbReference type="SAM" id="MobiDB-lite"/>
    </source>
</evidence>
<evidence type="ECO:0000269" key="5">
    <source>
    </source>
</evidence>
<evidence type="ECO:0000269" key="6">
    <source>
    </source>
</evidence>
<evidence type="ECO:0000269" key="7">
    <source>
    </source>
</evidence>
<evidence type="ECO:0000269" key="8">
    <source>
    </source>
</evidence>
<evidence type="ECO:0000269" key="9">
    <source>
    </source>
</evidence>
<evidence type="ECO:0000269" key="10">
    <source>
    </source>
</evidence>
<evidence type="ECO:0000269" key="11">
    <source>
    </source>
</evidence>
<evidence type="ECO:0000269" key="12">
    <source>
    </source>
</evidence>
<evidence type="ECO:0000269" key="13">
    <source>
    </source>
</evidence>
<evidence type="ECO:0000305" key="14"/>
<feature type="chain" id="PRO_0000191354" description="Dapper homolog 1">
    <location>
        <begin position="1"/>
        <end position="778"/>
    </location>
</feature>
<feature type="region of interest" description="Disordered" evidence="4">
    <location>
        <begin position="1"/>
        <end position="40"/>
    </location>
</feature>
<feature type="region of interest" description="Required for self-association">
    <location>
        <begin position="85"/>
        <end position="149"/>
    </location>
</feature>
<feature type="region of interest" description="Disordered" evidence="4">
    <location>
        <begin position="305"/>
        <end position="324"/>
    </location>
</feature>
<feature type="region of interest" description="Disordered" evidence="4">
    <location>
        <begin position="359"/>
        <end position="386"/>
    </location>
</feature>
<feature type="region of interest" description="Disordered" evidence="4">
    <location>
        <begin position="397"/>
        <end position="416"/>
    </location>
</feature>
<feature type="region of interest" description="Disordered" evidence="4">
    <location>
        <begin position="428"/>
        <end position="468"/>
    </location>
</feature>
<feature type="region of interest" description="Disordered" evidence="4">
    <location>
        <begin position="544"/>
        <end position="616"/>
    </location>
</feature>
<feature type="region of interest" description="Disordered" evidence="4">
    <location>
        <begin position="694"/>
        <end position="721"/>
    </location>
</feature>
<feature type="coiled-coil region" evidence="3">
    <location>
        <begin position="85"/>
        <end position="149"/>
    </location>
</feature>
<feature type="short sequence motif" description="Nuclear export signal" evidence="1">
    <location>
        <begin position="125"/>
        <end position="134"/>
    </location>
</feature>
<feature type="short sequence motif" description="Bipartite nuclear localization signal" evidence="1">
    <location>
        <begin position="551"/>
        <end position="564"/>
    </location>
</feature>
<feature type="short sequence motif" description="PDZ-binding">
    <location>
        <begin position="768"/>
        <end position="778"/>
    </location>
</feature>
<feature type="compositionally biased region" description="Basic and acidic residues" evidence="4">
    <location>
        <begin position="1"/>
        <end position="10"/>
    </location>
</feature>
<feature type="compositionally biased region" description="Basic and acidic residues" evidence="4">
    <location>
        <begin position="18"/>
        <end position="40"/>
    </location>
</feature>
<feature type="compositionally biased region" description="Basic and acidic residues" evidence="4">
    <location>
        <begin position="375"/>
        <end position="386"/>
    </location>
</feature>
<feature type="compositionally biased region" description="Polar residues" evidence="4">
    <location>
        <begin position="432"/>
        <end position="443"/>
    </location>
</feature>
<feature type="compositionally biased region" description="Basic and acidic residues" evidence="4">
    <location>
        <begin position="554"/>
        <end position="563"/>
    </location>
</feature>
<feature type="compositionally biased region" description="Basic residues" evidence="4">
    <location>
        <begin position="564"/>
        <end position="574"/>
    </location>
</feature>
<feature type="compositionally biased region" description="Polar residues" evidence="4">
    <location>
        <begin position="694"/>
        <end position="704"/>
    </location>
</feature>
<feature type="modified residue" description="Phosphoserine; by PKA" evidence="2">
    <location>
        <position position="769"/>
    </location>
</feature>
<feature type="sequence conflict" description="In Ref. 2; AAO49712." evidence="14" ref="2">
    <original>AE</original>
    <variation>SN</variation>
    <location>
        <begin position="18"/>
        <end position="19"/>
    </location>
</feature>
<feature type="sequence conflict" description="In Ref. 2; AAO49712." evidence="14" ref="2">
    <original>C</original>
    <variation>F</variation>
    <location>
        <position position="333"/>
    </location>
</feature>
<feature type="sequence conflict" description="In Ref. 4; AAF65568." evidence="14" ref="4">
    <original>G</original>
    <variation>V</variation>
    <location>
        <position position="343"/>
    </location>
</feature>
<feature type="sequence conflict" description="In Ref. 2; AAO49712." evidence="14" ref="2">
    <original>M</original>
    <variation>I</variation>
    <location>
        <position position="430"/>
    </location>
</feature>
<feature type="sequence conflict" description="In Ref. 4; AAF65568." evidence="14" ref="4">
    <original>A</original>
    <variation>G</variation>
    <location>
        <position position="510"/>
    </location>
</feature>
<feature type="sequence conflict" description="In Ref. 2; AAO49712." evidence="14" ref="2">
    <original>R</original>
    <variation>S</variation>
    <location>
        <position position="511"/>
    </location>
</feature>
<feature type="sequence conflict" description="In Ref. 4; AAF65568." evidence="14" ref="4">
    <original>V</original>
    <variation>G</variation>
    <location>
        <position position="681"/>
    </location>
</feature>